<gene>
    <name type="primary">DEFB104A</name>
    <name type="synonym">DEFB104</name>
    <name type="synonym">DEFB4</name>
</gene>
<proteinExistence type="inferred from homology"/>
<reference key="1">
    <citation type="journal article" date="2005" name="Physiol. Genomics">
        <title>Cross-species analysis of the mammalian beta-defensin gene family: presence of syntenic gene clusters and preferential expression in the male reproductive tract.</title>
        <authorList>
            <person name="Patil A.A."/>
            <person name="Cai Y."/>
            <person name="Sang Y."/>
            <person name="Blecha F."/>
            <person name="Zhang G."/>
        </authorList>
    </citation>
    <scope>NUCLEOTIDE SEQUENCE [MRNA]</scope>
</reference>
<reference key="2">
    <citation type="submission" date="2006-11" db="EMBL/GenBank/DDBJ databases">
        <title>Evolution and sequence variation of human beta-defensin genes.</title>
        <authorList>
            <person name="Hollox E.J."/>
            <person name="Armour J.A.L."/>
        </authorList>
    </citation>
    <scope>NUCLEOTIDE SEQUENCE [GENOMIC DNA]</scope>
</reference>
<reference key="3">
    <citation type="journal article" date="2005" name="BMC Evol. Biol.">
        <title>The complexity of selection at the major primate beta-defensin locus.</title>
        <authorList>
            <person name="Semple C.A.M."/>
            <person name="Maxwell A."/>
            <person name="Gautier P."/>
            <person name="Kilanowski F.M."/>
            <person name="Eastwood H."/>
            <person name="Barran P.E."/>
            <person name="Dorin J.R."/>
        </authorList>
    </citation>
    <scope>NUCLEOTIDE SEQUENCE [GENOMIC DNA] OF 21-72</scope>
</reference>
<keyword id="KW-0044">Antibiotic</keyword>
<keyword id="KW-0929">Antimicrobial</keyword>
<keyword id="KW-0211">Defensin</keyword>
<keyword id="KW-1015">Disulfide bond</keyword>
<keyword id="KW-1185">Reference proteome</keyword>
<keyword id="KW-0964">Secreted</keyword>
<keyword id="KW-0732">Signal</keyword>
<dbReference type="EMBL" id="DQ012057">
    <property type="protein sequence ID" value="AAY59789.1"/>
    <property type="molecule type" value="mRNA"/>
</dbReference>
<dbReference type="EMBL" id="AM410106">
    <property type="protein sequence ID" value="CAL68921.1"/>
    <property type="molecule type" value="Genomic_DNA"/>
</dbReference>
<dbReference type="EMBL" id="AY831732">
    <property type="protein sequence ID" value="AAW32913.1"/>
    <property type="molecule type" value="Genomic_DNA"/>
</dbReference>
<dbReference type="RefSeq" id="NP_001107040.1">
    <property type="nucleotide sequence ID" value="NM_001113568.1"/>
</dbReference>
<dbReference type="SMR" id="Q5IAB9"/>
<dbReference type="FunCoup" id="Q5IAB9">
    <property type="interactions" value="4"/>
</dbReference>
<dbReference type="STRING" id="9598.ENSPTRP00000034195"/>
<dbReference type="PaxDb" id="9598-ENSPTRP00000034195"/>
<dbReference type="Ensembl" id="ENSPTRT00000037001.2">
    <property type="protein sequence ID" value="ENSPTRP00000034195.1"/>
    <property type="gene ID" value="ENSPTRG00000019962.2"/>
</dbReference>
<dbReference type="GeneID" id="735929"/>
<dbReference type="KEGG" id="ptr:735929"/>
<dbReference type="CTD" id="735929"/>
<dbReference type="eggNOG" id="ENOG502TDUP">
    <property type="taxonomic scope" value="Eukaryota"/>
</dbReference>
<dbReference type="GeneTree" id="ENSGT00940000164302"/>
<dbReference type="HOGENOM" id="CLU_202010_0_0_1"/>
<dbReference type="InParanoid" id="Q5IAB9"/>
<dbReference type="OMA" id="KCQNQEY"/>
<dbReference type="OrthoDB" id="11867at9604"/>
<dbReference type="Proteomes" id="UP000002277">
    <property type="component" value="Unplaced"/>
</dbReference>
<dbReference type="GO" id="GO:0005576">
    <property type="term" value="C:extracellular region"/>
    <property type="evidence" value="ECO:0007669"/>
    <property type="project" value="UniProtKB-SubCell"/>
</dbReference>
<dbReference type="GO" id="GO:0042742">
    <property type="term" value="P:defense response to bacterium"/>
    <property type="evidence" value="ECO:0007669"/>
    <property type="project" value="UniProtKB-KW"/>
</dbReference>
<dbReference type="GO" id="GO:0045087">
    <property type="term" value="P:innate immune response"/>
    <property type="evidence" value="ECO:0007669"/>
    <property type="project" value="InterPro"/>
</dbReference>
<dbReference type="InterPro" id="IPR025933">
    <property type="entry name" value="Beta_defensin_dom"/>
</dbReference>
<dbReference type="Pfam" id="PF13841">
    <property type="entry name" value="Defensin_beta_2"/>
    <property type="match status" value="1"/>
</dbReference>
<accession>Q5IAB9</accession>
<accession>A4H201</accession>
<accession>Q30KM1</accession>
<sequence length="72" mass="8526">MQRLVLLLAISLLLYQDLPVRSEFELDRICGYGTARCRKKCRSQEYRIGRCPNTYACCLRKWDESLLNRTKP</sequence>
<feature type="signal peptide" evidence="2">
    <location>
        <begin position="1"/>
        <end position="22"/>
    </location>
</feature>
<feature type="peptide" id="PRO_0000006974" description="Beta-defensin 104A">
    <location>
        <begin position="23"/>
        <end position="72"/>
    </location>
</feature>
<feature type="disulfide bond" evidence="1">
    <location>
        <begin position="30"/>
        <end position="57"/>
    </location>
</feature>
<feature type="disulfide bond" evidence="1">
    <location>
        <begin position="37"/>
        <end position="51"/>
    </location>
</feature>
<feature type="disulfide bond" evidence="1">
    <location>
        <begin position="41"/>
        <end position="58"/>
    </location>
</feature>
<comment type="function">
    <text evidence="1">Has antimicrobial activity.</text>
</comment>
<comment type="subcellular location">
    <subcellularLocation>
        <location evidence="1">Secreted</location>
    </subcellularLocation>
</comment>
<comment type="similarity">
    <text evidence="3">Belongs to the beta-defensin family.</text>
</comment>
<protein>
    <recommendedName>
        <fullName>Beta-defensin 104A</fullName>
    </recommendedName>
    <alternativeName>
        <fullName>Beta-defensin 4</fullName>
        <shortName>BD-4</shortName>
        <shortName>DEFB-4</shortName>
        <shortName>cBD-4</shortName>
    </alternativeName>
    <alternativeName>
        <fullName>Defensin, beta 104</fullName>
    </alternativeName>
    <alternativeName>
        <fullName>Defensin, beta 104A</fullName>
    </alternativeName>
</protein>
<organism>
    <name type="scientific">Pan troglodytes</name>
    <name type="common">Chimpanzee</name>
    <dbReference type="NCBI Taxonomy" id="9598"/>
    <lineage>
        <taxon>Eukaryota</taxon>
        <taxon>Metazoa</taxon>
        <taxon>Chordata</taxon>
        <taxon>Craniata</taxon>
        <taxon>Vertebrata</taxon>
        <taxon>Euteleostomi</taxon>
        <taxon>Mammalia</taxon>
        <taxon>Eutheria</taxon>
        <taxon>Euarchontoglires</taxon>
        <taxon>Primates</taxon>
        <taxon>Haplorrhini</taxon>
        <taxon>Catarrhini</taxon>
        <taxon>Hominidae</taxon>
        <taxon>Pan</taxon>
    </lineage>
</organism>
<evidence type="ECO:0000250" key="1"/>
<evidence type="ECO:0000255" key="2"/>
<evidence type="ECO:0000305" key="3"/>
<name>D104A_PANTR</name>